<organism>
    <name type="scientific">Vibrio anguillarum (strain ATCC 68554 / 775)</name>
    <name type="common">Listonella anguillarum</name>
    <dbReference type="NCBI Taxonomy" id="882102"/>
    <lineage>
        <taxon>Bacteria</taxon>
        <taxon>Pseudomonadati</taxon>
        <taxon>Pseudomonadota</taxon>
        <taxon>Gammaproteobacteria</taxon>
        <taxon>Vibrionales</taxon>
        <taxon>Vibrionaceae</taxon>
        <taxon>Vibrio</taxon>
    </lineage>
</organism>
<comment type="function">
    <text evidence="2 3">Involved in the uptake of iron in complex with the siderophore anguibactin. Responsible for the translocation of ferric-anguibactin across the cytoplasmic membrane.</text>
</comment>
<comment type="subunit">
    <text evidence="6">Part of an iron transport system composed of the outer membrane receptor FatA, the periplasmic binding protein FatB and the inner membrane proteins FatC and FatD.</text>
</comment>
<comment type="subcellular location">
    <subcellularLocation>
        <location evidence="5">Cell inner membrane</location>
        <topology evidence="1">Multi-pass membrane protein</topology>
    </subcellularLocation>
</comment>
<comment type="disruption phenotype">
    <text evidence="2 3">Mutants cannot transport ferric-anguibactin and are unable to grow under iron-limiting conditions.</text>
</comment>
<comment type="similarity">
    <text evidence="5">Belongs to the binding-protein-dependent transport system permease family. FecCD subfamily.</text>
</comment>
<accession>P37738</accession>
<proteinExistence type="evidence at protein level"/>
<name>FATD_VIBA7</name>
<geneLocation type="plasmid">
    <name>pJM1</name>
</geneLocation>
<evidence type="ECO:0000255" key="1"/>
<evidence type="ECO:0000269" key="2">
    <source>
    </source>
</evidence>
<evidence type="ECO:0000269" key="3">
    <source>
    </source>
</evidence>
<evidence type="ECO:0000303" key="4">
    <source>
    </source>
</evidence>
<evidence type="ECO:0000305" key="5"/>
<evidence type="ECO:0000305" key="6">
    <source>
    </source>
</evidence>
<gene>
    <name evidence="4" type="primary">fatD</name>
</gene>
<reference key="1">
    <citation type="journal article" date="1991" name="J. Biol. Chem.">
        <title>Molecular characterization of the iron transport system mediated by the pJM1 plasmid in Vibrio anguillarum 775.</title>
        <authorList>
            <person name="Koester W.L."/>
            <person name="Actis L.A."/>
            <person name="Waldbeser L.S."/>
            <person name="Tolmasky M.E."/>
            <person name="Crosa J.H."/>
        </authorList>
    </citation>
    <scope>NUCLEOTIDE SEQUENCE [GENOMIC DNA]</scope>
    <scope>DISRUPTION PHENOTYPE</scope>
    <scope>FUNCTION</scope>
    <scope>SUBUNIT</scope>
    <source>
        <strain>ATCC 68554 / 775</strain>
    </source>
</reference>
<reference key="2">
    <citation type="journal article" date="2003" name="J. Bacteriol.">
        <title>Complete sequence of virulence plasmid pJM1 from the marine fish pathogen Vibrio anguillarum strain 775.</title>
        <authorList>
            <person name="Di Lorenzo M."/>
            <person name="Stork M."/>
            <person name="Tolmasky M.E."/>
            <person name="Actis L.A."/>
            <person name="Farrell D."/>
            <person name="Welch T.J."/>
            <person name="Crosa L.M."/>
            <person name="Wertheimer A.M."/>
            <person name="Chen Q."/>
            <person name="Salinas P."/>
            <person name="Waldbeser L."/>
            <person name="Crosa J.H."/>
        </authorList>
    </citation>
    <scope>NUCLEOTIDE SEQUENCE [LARGE SCALE GENOMIC DNA]</scope>
    <source>
        <strain>ATCC 68554 / 775</strain>
    </source>
</reference>
<reference key="3">
    <citation type="journal article" date="2011" name="Infect. Immun.">
        <title>Complete genome sequence of the marine fish pathogen Vibrio anguillarum harboring the pJM1 virulence plasmid and genomic comparison with other virulent strains of V. anguillarum and V. ordalii.</title>
        <authorList>
            <person name="Naka H."/>
            <person name="Dias G.M."/>
            <person name="Thompson C.C."/>
            <person name="Dubay C."/>
            <person name="Thompson F.L."/>
            <person name="Crosa J.H."/>
        </authorList>
    </citation>
    <scope>NUCLEOTIDE SEQUENCE [LARGE SCALE GENOMIC DNA]</scope>
    <source>
        <strain>ATCC 68554 / 775</strain>
    </source>
</reference>
<reference key="4">
    <citation type="journal article" date="2010" name="Environ. Microbiol. Rep.">
        <title>Role of the pJM1 plasmid-encoded transport proteins FatB, C and D in ferric anguibactin uptake in the fish pathogen Vibrio anguillarum.</title>
        <authorList>
            <person name="Naka H."/>
            <person name="Lopez C.S."/>
            <person name="Crosa J.H."/>
        </authorList>
    </citation>
    <scope>FUNCTION</scope>
    <scope>DISRUPTION PHENOTYPE</scope>
    <source>
        <strain>ATCC 68554 / 775</strain>
    </source>
</reference>
<dbReference type="EMBL" id="AY312585">
    <property type="protein sequence ID" value="AAR12524.1"/>
    <property type="molecule type" value="Genomic_DNA"/>
</dbReference>
<dbReference type="PIR" id="A41671">
    <property type="entry name" value="A41671"/>
</dbReference>
<dbReference type="RefSeq" id="NP_943549.1">
    <property type="nucleotide sequence ID" value="NC_005250.1"/>
</dbReference>
<dbReference type="RefSeq" id="WP_011154635.1">
    <property type="nucleotide sequence ID" value="NC_005250.1"/>
</dbReference>
<dbReference type="SMR" id="P37738"/>
<dbReference type="eggNOG" id="COG4606">
    <property type="taxonomic scope" value="Bacteria"/>
</dbReference>
<dbReference type="GO" id="GO:0005886">
    <property type="term" value="C:plasma membrane"/>
    <property type="evidence" value="ECO:0007669"/>
    <property type="project" value="UniProtKB-SubCell"/>
</dbReference>
<dbReference type="GO" id="GO:0022857">
    <property type="term" value="F:transmembrane transporter activity"/>
    <property type="evidence" value="ECO:0007669"/>
    <property type="project" value="InterPro"/>
</dbReference>
<dbReference type="GO" id="GO:0033214">
    <property type="term" value="P:siderophore-dependent iron import into cell"/>
    <property type="evidence" value="ECO:0007669"/>
    <property type="project" value="TreeGrafter"/>
</dbReference>
<dbReference type="CDD" id="cd06550">
    <property type="entry name" value="TM_ABC_iron-siderophores_like"/>
    <property type="match status" value="1"/>
</dbReference>
<dbReference type="Gene3D" id="1.10.3470.10">
    <property type="entry name" value="ABC transporter involved in vitamin B12 uptake, BtuC"/>
    <property type="match status" value="1"/>
</dbReference>
<dbReference type="InterPro" id="IPR037294">
    <property type="entry name" value="ABC_BtuC-like"/>
</dbReference>
<dbReference type="InterPro" id="IPR000522">
    <property type="entry name" value="ABC_transptr_permease_BtuC"/>
</dbReference>
<dbReference type="PANTHER" id="PTHR30472">
    <property type="entry name" value="FERRIC ENTEROBACTIN TRANSPORT SYSTEM PERMEASE PROTEIN"/>
    <property type="match status" value="1"/>
</dbReference>
<dbReference type="PANTHER" id="PTHR30472:SF27">
    <property type="entry name" value="PETROBACTIN IMPORT SYSTEM PERMEASE PROTEIN YCLN"/>
    <property type="match status" value="1"/>
</dbReference>
<dbReference type="Pfam" id="PF01032">
    <property type="entry name" value="FecCD"/>
    <property type="match status" value="1"/>
</dbReference>
<dbReference type="SUPFAM" id="SSF81345">
    <property type="entry name" value="ABC transporter involved in vitamin B12 uptake, BtuC"/>
    <property type="match status" value="1"/>
</dbReference>
<feature type="chain" id="PRO_0000060014" description="Ferric-anguibactin transport system permease protein FatD">
    <location>
        <begin position="1"/>
        <end position="314"/>
    </location>
</feature>
<feature type="transmembrane region" description="Helical" evidence="1">
    <location>
        <begin position="1"/>
        <end position="21"/>
    </location>
</feature>
<feature type="transmembrane region" description="Helical" evidence="1">
    <location>
        <begin position="49"/>
        <end position="69"/>
    </location>
</feature>
<feature type="transmembrane region" description="Helical" evidence="1">
    <location>
        <begin position="76"/>
        <end position="96"/>
    </location>
</feature>
<feature type="transmembrane region" description="Helical" evidence="1">
    <location>
        <begin position="103"/>
        <end position="123"/>
    </location>
</feature>
<feature type="transmembrane region" description="Helical" evidence="1">
    <location>
        <begin position="132"/>
        <end position="152"/>
    </location>
</feature>
<feature type="transmembrane region" description="Helical" evidence="1">
    <location>
        <begin position="180"/>
        <end position="200"/>
    </location>
</feature>
<feature type="transmembrane region" description="Helical" evidence="1">
    <location>
        <begin position="207"/>
        <end position="226"/>
    </location>
</feature>
<feature type="transmembrane region" description="Helical" evidence="1">
    <location>
        <begin position="230"/>
        <end position="252"/>
    </location>
</feature>
<feature type="transmembrane region" description="Helical" evidence="1">
    <location>
        <begin position="265"/>
        <end position="285"/>
    </location>
</feature>
<feature type="transmembrane region" description="Helical" evidence="1">
    <location>
        <begin position="288"/>
        <end position="308"/>
    </location>
</feature>
<sequence length="314" mass="33923">MTFRMILAFFTLCATSLFFGANQIEWSLLPTFNEKAWLPIIASRLPRLVALILTGSGLAMCGVILQHIVRNRFVEPGTTGSLDAAKLGILVSIVMLPSSDKLERMFFAVLFCFAAGLVYIAIIRKVKFSNTALVPVIGLMFGSVLSALAEFYAYQNNILQSMSGWLMGDFSKVVQEHYEIIFLILPITLLTYLYAHRFTVMGMGEDIASNLGISYAMTAALGLILVSITVAVTVVTVGAIHFVGLVIPNLVALKYGDHLKNTLPIVALGGASLLIFCDVISRVVLFPFEVPVGLTASAVGGVMFLAFLLKGAKA</sequence>
<protein>
    <recommendedName>
        <fullName evidence="5">Ferric-anguibactin transport system permease protein FatD</fullName>
    </recommendedName>
</protein>
<keyword id="KW-0997">Cell inner membrane</keyword>
<keyword id="KW-1003">Cell membrane</keyword>
<keyword id="KW-0406">Ion transport</keyword>
<keyword id="KW-0408">Iron</keyword>
<keyword id="KW-0410">Iron transport</keyword>
<keyword id="KW-0472">Membrane</keyword>
<keyword id="KW-0614">Plasmid</keyword>
<keyword id="KW-0812">Transmembrane</keyword>
<keyword id="KW-1133">Transmembrane helix</keyword>
<keyword id="KW-0813">Transport</keyword>